<evidence type="ECO:0000255" key="1">
    <source>
        <dbReference type="HAMAP-Rule" id="MF_01341"/>
    </source>
</evidence>
<evidence type="ECO:0000256" key="2">
    <source>
        <dbReference type="SAM" id="MobiDB-lite"/>
    </source>
</evidence>
<evidence type="ECO:0000305" key="3"/>
<keyword id="KW-0687">Ribonucleoprotein</keyword>
<keyword id="KW-0689">Ribosomal protein</keyword>
<keyword id="KW-0694">RNA-binding</keyword>
<keyword id="KW-0699">rRNA-binding</keyword>
<accession>C1ET58</accession>
<organism>
    <name type="scientific">Bacillus cereus (strain 03BB102)</name>
    <dbReference type="NCBI Taxonomy" id="572264"/>
    <lineage>
        <taxon>Bacteria</taxon>
        <taxon>Bacillati</taxon>
        <taxon>Bacillota</taxon>
        <taxon>Bacilli</taxon>
        <taxon>Bacillales</taxon>
        <taxon>Bacillaceae</taxon>
        <taxon>Bacillus</taxon>
        <taxon>Bacillus cereus group</taxon>
    </lineage>
</organism>
<reference key="1">
    <citation type="submission" date="2009-02" db="EMBL/GenBank/DDBJ databases">
        <title>Genome sequence of Bacillus cereus 03BB102.</title>
        <authorList>
            <person name="Dodson R.J."/>
            <person name="Jackson P."/>
            <person name="Munk A.C."/>
            <person name="Brettin T."/>
            <person name="Bruce D."/>
            <person name="Detter C."/>
            <person name="Tapia R."/>
            <person name="Han C."/>
            <person name="Sutton G."/>
            <person name="Sims D."/>
        </authorList>
    </citation>
    <scope>NUCLEOTIDE SEQUENCE [LARGE SCALE GENOMIC DNA]</scope>
    <source>
        <strain>03BB102</strain>
    </source>
</reference>
<comment type="function">
    <text evidence="1">Binds to the 23S rRNA.</text>
</comment>
<comment type="subunit">
    <text evidence="1">Part of the 50S ribosomal subunit.</text>
</comment>
<comment type="similarity">
    <text evidence="1">Belongs to the universal ribosomal protein uL15 family.</text>
</comment>
<dbReference type="EMBL" id="CP001407">
    <property type="protein sequence ID" value="ACO29221.1"/>
    <property type="molecule type" value="Genomic_DNA"/>
</dbReference>
<dbReference type="RefSeq" id="WP_000766080.1">
    <property type="nucleotide sequence ID" value="NZ_CP009318.1"/>
</dbReference>
<dbReference type="SMR" id="C1ET58"/>
<dbReference type="GeneID" id="93010924"/>
<dbReference type="KEGG" id="bcx:BCA_0158"/>
<dbReference type="PATRIC" id="fig|572264.18.peg.193"/>
<dbReference type="Proteomes" id="UP000002210">
    <property type="component" value="Chromosome"/>
</dbReference>
<dbReference type="GO" id="GO:0022625">
    <property type="term" value="C:cytosolic large ribosomal subunit"/>
    <property type="evidence" value="ECO:0007669"/>
    <property type="project" value="TreeGrafter"/>
</dbReference>
<dbReference type="GO" id="GO:0019843">
    <property type="term" value="F:rRNA binding"/>
    <property type="evidence" value="ECO:0007669"/>
    <property type="project" value="UniProtKB-UniRule"/>
</dbReference>
<dbReference type="GO" id="GO:0003735">
    <property type="term" value="F:structural constituent of ribosome"/>
    <property type="evidence" value="ECO:0007669"/>
    <property type="project" value="InterPro"/>
</dbReference>
<dbReference type="GO" id="GO:0006412">
    <property type="term" value="P:translation"/>
    <property type="evidence" value="ECO:0007669"/>
    <property type="project" value="UniProtKB-UniRule"/>
</dbReference>
<dbReference type="FunFam" id="3.100.10.10:FF:000004">
    <property type="entry name" value="50S ribosomal protein L15"/>
    <property type="match status" value="1"/>
</dbReference>
<dbReference type="Gene3D" id="3.100.10.10">
    <property type="match status" value="1"/>
</dbReference>
<dbReference type="HAMAP" id="MF_01341">
    <property type="entry name" value="Ribosomal_uL15"/>
    <property type="match status" value="1"/>
</dbReference>
<dbReference type="InterPro" id="IPR030878">
    <property type="entry name" value="Ribosomal_uL15"/>
</dbReference>
<dbReference type="InterPro" id="IPR021131">
    <property type="entry name" value="Ribosomal_uL15/eL18"/>
</dbReference>
<dbReference type="InterPro" id="IPR036227">
    <property type="entry name" value="Ribosomal_uL15/eL18_sf"/>
</dbReference>
<dbReference type="InterPro" id="IPR005749">
    <property type="entry name" value="Ribosomal_uL15_bac-type"/>
</dbReference>
<dbReference type="InterPro" id="IPR001196">
    <property type="entry name" value="Ribosomal_uL15_CS"/>
</dbReference>
<dbReference type="NCBIfam" id="TIGR01071">
    <property type="entry name" value="rplO_bact"/>
    <property type="match status" value="1"/>
</dbReference>
<dbReference type="PANTHER" id="PTHR12934">
    <property type="entry name" value="50S RIBOSOMAL PROTEIN L15"/>
    <property type="match status" value="1"/>
</dbReference>
<dbReference type="PANTHER" id="PTHR12934:SF11">
    <property type="entry name" value="LARGE RIBOSOMAL SUBUNIT PROTEIN UL15M"/>
    <property type="match status" value="1"/>
</dbReference>
<dbReference type="Pfam" id="PF00828">
    <property type="entry name" value="Ribosomal_L27A"/>
    <property type="match status" value="1"/>
</dbReference>
<dbReference type="SUPFAM" id="SSF52080">
    <property type="entry name" value="Ribosomal proteins L15p and L18e"/>
    <property type="match status" value="1"/>
</dbReference>
<dbReference type="PROSITE" id="PS00475">
    <property type="entry name" value="RIBOSOMAL_L15"/>
    <property type="match status" value="1"/>
</dbReference>
<gene>
    <name evidence="1" type="primary">rplO</name>
    <name type="ordered locus">BCA_0158</name>
</gene>
<feature type="chain" id="PRO_1000166274" description="Large ribosomal subunit protein uL15">
    <location>
        <begin position="1"/>
        <end position="146"/>
    </location>
</feature>
<feature type="region of interest" description="Disordered" evidence="2">
    <location>
        <begin position="1"/>
        <end position="52"/>
    </location>
</feature>
<feature type="compositionally biased region" description="Basic and acidic residues" evidence="2">
    <location>
        <begin position="1"/>
        <end position="13"/>
    </location>
</feature>
<feature type="compositionally biased region" description="Gly residues" evidence="2">
    <location>
        <begin position="21"/>
        <end position="31"/>
    </location>
</feature>
<feature type="compositionally biased region" description="Gly residues" evidence="2">
    <location>
        <begin position="42"/>
        <end position="52"/>
    </location>
</feature>
<sequence>MKLHELKPAEGSRKVRNRVGRGIGSGNGKTAGKGHKGQNARSGGGVRLGFEGGQTPLFRRLPKRGFTNINRKEFAIVNLSTLNRFEDGTEVTPELLLETGVISKLNDGVKILASGAVEKKLTVKAHKFSSSAKEAIEAAGGSVEVI</sequence>
<protein>
    <recommendedName>
        <fullName evidence="1">Large ribosomal subunit protein uL15</fullName>
    </recommendedName>
    <alternativeName>
        <fullName evidence="3">50S ribosomal protein L15</fullName>
    </alternativeName>
</protein>
<name>RL15_BACC3</name>
<proteinExistence type="inferred from homology"/>